<evidence type="ECO:0000250" key="1"/>
<evidence type="ECO:0000250" key="2">
    <source>
        <dbReference type="UniProtKB" id="Q3V0Q7"/>
    </source>
</evidence>
<evidence type="ECO:0000255" key="3"/>
<evidence type="ECO:0000255" key="4">
    <source>
        <dbReference type="PROSITE-ProRule" id="PRU00274"/>
    </source>
</evidence>
<evidence type="ECO:0000256" key="5">
    <source>
        <dbReference type="SAM" id="MobiDB-lite"/>
    </source>
</evidence>
<evidence type="ECO:0000269" key="6">
    <source>
    </source>
</evidence>
<evidence type="ECO:0000269" key="7">
    <source>
    </source>
</evidence>
<evidence type="ECO:0000269" key="8">
    <source>
    </source>
</evidence>
<evidence type="ECO:0000312" key="9">
    <source>
        <dbReference type="HGNC" id="HGNC:28779"/>
    </source>
</evidence>
<accession>Q86WS5</accession>
<accession>B9ZVX2</accession>
<feature type="signal peptide" evidence="3">
    <location>
        <begin position="1"/>
        <end position="20"/>
    </location>
</feature>
<feature type="chain" id="PRO_0000290438" description="Transmembrane protease serine 12">
    <location>
        <begin position="21"/>
        <end position="348"/>
    </location>
</feature>
<feature type="topological domain" description="Extracellular" evidence="3">
    <location>
        <begin position="21"/>
        <end position="324"/>
    </location>
</feature>
<feature type="transmembrane region" description="Helical" evidence="3">
    <location>
        <begin position="325"/>
        <end position="345"/>
    </location>
</feature>
<feature type="topological domain" description="Cytoplasmic" evidence="3">
    <location>
        <begin position="346"/>
        <end position="348"/>
    </location>
</feature>
<feature type="domain" description="Peptidase S1" evidence="4">
    <location>
        <begin position="78"/>
        <end position="318"/>
    </location>
</feature>
<feature type="region of interest" description="Disordered" evidence="5">
    <location>
        <begin position="24"/>
        <end position="46"/>
    </location>
</feature>
<feature type="active site" description="Charge relay system" evidence="1">
    <location>
        <position position="122"/>
    </location>
</feature>
<feature type="active site" description="Charge relay system" evidence="1">
    <location>
        <position position="171"/>
    </location>
</feature>
<feature type="active site" description="Charge relay system" evidence="1">
    <location>
        <position position="268"/>
    </location>
</feature>
<feature type="glycosylation site" description="N-linked (GlcNAc...) asparagine" evidence="3">
    <location>
        <position position="219"/>
    </location>
</feature>
<feature type="glycosylation site" description="N-linked (GlcNAc...) asparagine" evidence="3">
    <location>
        <position position="249"/>
    </location>
</feature>
<feature type="disulfide bond" evidence="4">
    <location>
        <begin position="107"/>
        <end position="123"/>
    </location>
</feature>
<feature type="disulfide bond" evidence="4">
    <location>
        <begin position="206"/>
        <end position="274"/>
    </location>
</feature>
<feature type="disulfide bond" evidence="4">
    <location>
        <begin position="237"/>
        <end position="253"/>
    </location>
</feature>
<feature type="disulfide bond" evidence="4">
    <location>
        <begin position="264"/>
        <end position="294"/>
    </location>
</feature>
<feature type="sequence variant" id="VAR_051848" description="In dbSNP:rs10876100.">
    <original>Y</original>
    <variation>H</variation>
    <location>
        <position position="19"/>
    </location>
</feature>
<feature type="sequence variant" id="VAR_088098" description="Found in a patient with azoospermia; uncertain significance." evidence="8">
    <original>H</original>
    <variation>R</variation>
    <location>
        <position position="22"/>
    </location>
</feature>
<feature type="sequence variant" id="VAR_088099" description="Found in a patient with azoospermia; uncertain significance; dbSNP:rs771915335." evidence="8">
    <original>R</original>
    <variation>W</variation>
    <location>
        <position position="53"/>
    </location>
</feature>
<feature type="sequence variant" id="VAR_051849" description="In dbSNP:rs829121." evidence="6">
    <original>E</original>
    <variation>K</variation>
    <location>
        <position position="62"/>
    </location>
</feature>
<feature type="sequence variant" id="VAR_088100" description="Found in a patient with azoospermia; uncertain significance; dbSNP:rs369846570." evidence="8">
    <original>A</original>
    <variation>S</variation>
    <location>
        <position position="88"/>
    </location>
</feature>
<feature type="sequence variant" id="VAR_051850" description="In dbSNP:rs861204.">
    <original>A</original>
    <variation>T</variation>
    <location>
        <position position="127"/>
    </location>
</feature>
<feature type="sequence variant" id="VAR_088101" description="Found in a patient with azoospermia; uncertain significance; dbSNP:rs368879346." evidence="8">
    <original>A</original>
    <variation>T</variation>
    <location>
        <position position="156"/>
    </location>
</feature>
<feature type="sequence variant" id="VAR_088102" description="Found in patients with azoospermia; uncertain significance; dbSNP:rs1257577798." evidence="8">
    <original>G</original>
    <variation>R</variation>
    <location>
        <position position="212"/>
    </location>
</feature>
<feature type="sequence variant" id="VAR_088103" description="Found in a patient with azoospermia; uncertain significance; dbSNP:rs199914713." evidence="8">
    <original>R</original>
    <variation>C</variation>
    <location>
        <position position="332"/>
    </location>
</feature>
<proteinExistence type="evidence at protein level"/>
<protein>
    <recommendedName>
        <fullName evidence="9">Transmembrane protease serine 12</fullName>
        <ecNumber>3.4.21.-</ecNumber>
    </recommendedName>
</protein>
<reference key="1">
    <citation type="journal article" date="2006" name="Nature">
        <title>The finished DNA sequence of human chromosome 12.</title>
        <authorList>
            <person name="Scherer S.E."/>
            <person name="Muzny D.M."/>
            <person name="Buhay C.J."/>
            <person name="Chen R."/>
            <person name="Cree A."/>
            <person name="Ding Y."/>
            <person name="Dugan-Rocha S."/>
            <person name="Gill R."/>
            <person name="Gunaratne P."/>
            <person name="Harris R.A."/>
            <person name="Hawes A.C."/>
            <person name="Hernandez J."/>
            <person name="Hodgson A.V."/>
            <person name="Hume J."/>
            <person name="Jackson A."/>
            <person name="Khan Z.M."/>
            <person name="Kovar-Smith C."/>
            <person name="Lewis L.R."/>
            <person name="Lozado R.J."/>
            <person name="Metzker M.L."/>
            <person name="Milosavljevic A."/>
            <person name="Miner G.R."/>
            <person name="Montgomery K.T."/>
            <person name="Morgan M.B."/>
            <person name="Nazareth L.V."/>
            <person name="Scott G."/>
            <person name="Sodergren E."/>
            <person name="Song X.-Z."/>
            <person name="Steffen D."/>
            <person name="Lovering R.C."/>
            <person name="Wheeler D.A."/>
            <person name="Worley K.C."/>
            <person name="Yuan Y."/>
            <person name="Zhang Z."/>
            <person name="Adams C.Q."/>
            <person name="Ansari-Lari M.A."/>
            <person name="Ayele M."/>
            <person name="Brown M.J."/>
            <person name="Chen G."/>
            <person name="Chen Z."/>
            <person name="Clerc-Blankenburg K.P."/>
            <person name="Davis C."/>
            <person name="Delgado O."/>
            <person name="Dinh H.H."/>
            <person name="Draper H."/>
            <person name="Gonzalez-Garay M.L."/>
            <person name="Havlak P."/>
            <person name="Jackson L.R."/>
            <person name="Jacob L.S."/>
            <person name="Kelly S.H."/>
            <person name="Li L."/>
            <person name="Li Z."/>
            <person name="Liu J."/>
            <person name="Liu W."/>
            <person name="Lu J."/>
            <person name="Maheshwari M."/>
            <person name="Nguyen B.-V."/>
            <person name="Okwuonu G.O."/>
            <person name="Pasternak S."/>
            <person name="Perez L.M."/>
            <person name="Plopper F.J.H."/>
            <person name="Santibanez J."/>
            <person name="Shen H."/>
            <person name="Tabor P.E."/>
            <person name="Verduzco D."/>
            <person name="Waldron L."/>
            <person name="Wang Q."/>
            <person name="Williams G.A."/>
            <person name="Zhang J."/>
            <person name="Zhou J."/>
            <person name="Allen C.C."/>
            <person name="Amin A.G."/>
            <person name="Anyalebechi V."/>
            <person name="Bailey M."/>
            <person name="Barbaria J.A."/>
            <person name="Bimage K.E."/>
            <person name="Bryant N.P."/>
            <person name="Burch P.E."/>
            <person name="Burkett C.E."/>
            <person name="Burrell K.L."/>
            <person name="Calderon E."/>
            <person name="Cardenas V."/>
            <person name="Carter K."/>
            <person name="Casias K."/>
            <person name="Cavazos I."/>
            <person name="Cavazos S.R."/>
            <person name="Ceasar H."/>
            <person name="Chacko J."/>
            <person name="Chan S.N."/>
            <person name="Chavez D."/>
            <person name="Christopoulos C."/>
            <person name="Chu J."/>
            <person name="Cockrell R."/>
            <person name="Cox C.D."/>
            <person name="Dang M."/>
            <person name="Dathorne S.R."/>
            <person name="David R."/>
            <person name="Davis C.M."/>
            <person name="Davy-Carroll L."/>
            <person name="Deshazo D.R."/>
            <person name="Donlin J.E."/>
            <person name="D'Souza L."/>
            <person name="Eaves K.A."/>
            <person name="Egan A."/>
            <person name="Emery-Cohen A.J."/>
            <person name="Escotto M."/>
            <person name="Flagg N."/>
            <person name="Forbes L.D."/>
            <person name="Gabisi A.M."/>
            <person name="Garza M."/>
            <person name="Hamilton C."/>
            <person name="Henderson N."/>
            <person name="Hernandez O."/>
            <person name="Hines S."/>
            <person name="Hogues M.E."/>
            <person name="Huang M."/>
            <person name="Idlebird D.G."/>
            <person name="Johnson R."/>
            <person name="Jolivet A."/>
            <person name="Jones S."/>
            <person name="Kagan R."/>
            <person name="King L.M."/>
            <person name="Leal B."/>
            <person name="Lebow H."/>
            <person name="Lee S."/>
            <person name="LeVan J.M."/>
            <person name="Lewis L.C."/>
            <person name="London P."/>
            <person name="Lorensuhewa L.M."/>
            <person name="Loulseged H."/>
            <person name="Lovett D.A."/>
            <person name="Lucier A."/>
            <person name="Lucier R.L."/>
            <person name="Ma J."/>
            <person name="Madu R.C."/>
            <person name="Mapua P."/>
            <person name="Martindale A.D."/>
            <person name="Martinez E."/>
            <person name="Massey E."/>
            <person name="Mawhiney S."/>
            <person name="Meador M.G."/>
            <person name="Mendez S."/>
            <person name="Mercado C."/>
            <person name="Mercado I.C."/>
            <person name="Merritt C.E."/>
            <person name="Miner Z.L."/>
            <person name="Minja E."/>
            <person name="Mitchell T."/>
            <person name="Mohabbat F."/>
            <person name="Mohabbat K."/>
            <person name="Montgomery B."/>
            <person name="Moore N."/>
            <person name="Morris S."/>
            <person name="Munidasa M."/>
            <person name="Ngo R.N."/>
            <person name="Nguyen N.B."/>
            <person name="Nickerson E."/>
            <person name="Nwaokelemeh O.O."/>
            <person name="Nwokenkwo S."/>
            <person name="Obregon M."/>
            <person name="Oguh M."/>
            <person name="Oragunye N."/>
            <person name="Oviedo R.J."/>
            <person name="Parish B.J."/>
            <person name="Parker D.N."/>
            <person name="Parrish J."/>
            <person name="Parks K.L."/>
            <person name="Paul H.A."/>
            <person name="Payton B.A."/>
            <person name="Perez A."/>
            <person name="Perrin W."/>
            <person name="Pickens A."/>
            <person name="Primus E.L."/>
            <person name="Pu L.-L."/>
            <person name="Puazo M."/>
            <person name="Quiles M.M."/>
            <person name="Quiroz J.B."/>
            <person name="Rabata D."/>
            <person name="Reeves K."/>
            <person name="Ruiz S.J."/>
            <person name="Shao H."/>
            <person name="Sisson I."/>
            <person name="Sonaike T."/>
            <person name="Sorelle R.P."/>
            <person name="Sutton A.E."/>
            <person name="Svatek A.F."/>
            <person name="Svetz L.A."/>
            <person name="Tamerisa K.S."/>
            <person name="Taylor T.R."/>
            <person name="Teague B."/>
            <person name="Thomas N."/>
            <person name="Thorn R.D."/>
            <person name="Trejos Z.Y."/>
            <person name="Trevino B.K."/>
            <person name="Ukegbu O.N."/>
            <person name="Urban J.B."/>
            <person name="Vasquez L.I."/>
            <person name="Vera V.A."/>
            <person name="Villasana D.M."/>
            <person name="Wang L."/>
            <person name="Ward-Moore S."/>
            <person name="Warren J.T."/>
            <person name="Wei X."/>
            <person name="White F."/>
            <person name="Williamson A.L."/>
            <person name="Wleczyk R."/>
            <person name="Wooden H.S."/>
            <person name="Wooden S.H."/>
            <person name="Yen J."/>
            <person name="Yoon L."/>
            <person name="Yoon V."/>
            <person name="Zorrilla S.E."/>
            <person name="Nelson D."/>
            <person name="Kucherlapati R."/>
            <person name="Weinstock G."/>
            <person name="Gibbs R.A."/>
        </authorList>
    </citation>
    <scope>NUCLEOTIDE SEQUENCE [LARGE SCALE GENOMIC DNA]</scope>
</reference>
<reference key="2">
    <citation type="journal article" date="2004" name="Genome Res.">
        <title>The status, quality, and expansion of the NIH full-length cDNA project: the Mammalian Gene Collection (MGC).</title>
        <authorList>
            <consortium name="The MGC Project Team"/>
        </authorList>
    </citation>
    <scope>NUCLEOTIDE SEQUENCE [LARGE SCALE MRNA]</scope>
    <scope>VARIANT LYS-62</scope>
    <source>
        <tissue>Testis</tissue>
    </source>
</reference>
<reference key="3">
    <citation type="journal article" date="2013" name="Proteomics">
        <title>Scanning of novel cancer/testis proteins by human testis proteomic analysis.</title>
        <authorList>
            <person name="Liu M."/>
            <person name="Hu Z."/>
            <person name="Qi L."/>
            <person name="Wang J."/>
            <person name="Zhou T."/>
            <person name="Guo Y."/>
            <person name="Zeng Y."/>
            <person name="Zheng B."/>
            <person name="Wu Y."/>
            <person name="Zhang P."/>
            <person name="Chen X."/>
            <person name="Tu W."/>
            <person name="Zhang T."/>
            <person name="Zhou Q."/>
            <person name="Jiang M."/>
            <person name="Guo X."/>
            <person name="Zhou Z."/>
            <person name="Sha J."/>
        </authorList>
    </citation>
    <scope>SUBCELLULAR LOCATION</scope>
    <scope>TISSUE SPECIFICITY</scope>
</reference>
<reference key="4">
    <citation type="journal article" date="2022" name="Front. Cell Dev. Biol.">
        <title>TMPRSS12 Functions in Meiosis and Spermiogenesis and Is Required for Male Fertility in Mice.</title>
        <authorList>
            <person name="Zhang J."/>
            <person name="Zhou X."/>
            <person name="Wan D."/>
            <person name="Yu L."/>
            <person name="Chen X."/>
            <person name="Yan T."/>
            <person name="Wu Z."/>
            <person name="Zheng M."/>
            <person name="Zhu F."/>
            <person name="Zhu H."/>
        </authorList>
    </citation>
    <scope>VARIANTS ARG-22; TRP-53; SER-88; THR-156; ARG-212 AND CYS-332</scope>
</reference>
<keyword id="KW-1003">Cell membrane</keyword>
<keyword id="KW-0968">Cytoplasmic vesicle</keyword>
<keyword id="KW-0221">Differentiation</keyword>
<keyword id="KW-1015">Disulfide bond</keyword>
<keyword id="KW-0278">Fertilization</keyword>
<keyword id="KW-0325">Glycoprotein</keyword>
<keyword id="KW-0378">Hydrolase</keyword>
<keyword id="KW-0472">Membrane</keyword>
<keyword id="KW-0645">Protease</keyword>
<keyword id="KW-1267">Proteomics identification</keyword>
<keyword id="KW-1185">Reference proteome</keyword>
<keyword id="KW-0720">Serine protease</keyword>
<keyword id="KW-0732">Signal</keyword>
<keyword id="KW-0744">Spermatogenesis</keyword>
<keyword id="KW-0812">Transmembrane</keyword>
<keyword id="KW-1133">Transmembrane helix</keyword>
<name>TMPSC_HUMAN</name>
<comment type="function">
    <text evidence="2">Required for male fertility (By similarity). Plays a critical role in sperm capacitation and acrosome reactions during fertilization, and also plays a role in the regulation of proteins involved in spermatogenesis (By similarity). Regulates protein pathways that promote chromosomal synapsis formation, double-strand break repair, formation of the inner mitochondrial membrane cristae and apoptosis in developing sperm (By similarity). Required for normal sperm motility and binding to the zona pellucida, potentially via a role in ADAM3 protein maturation (By similarity).</text>
</comment>
<comment type="subcellular location">
    <subcellularLocation>
        <location evidence="7">Cell membrane</location>
        <topology evidence="3">Single-pass membrane protein</topology>
    </subcellularLocation>
    <subcellularLocation>
        <location evidence="2">Cytoplasmic vesicle</location>
        <location evidence="2">Secretory vesicle</location>
        <location evidence="2">Acrosome</location>
    </subcellularLocation>
    <text evidence="2">Expression in the acrosome decreases after acrosome reaction.</text>
</comment>
<comment type="tissue specificity">
    <text evidence="7">In testis, expressed in spermatocytes and spermatids (at protein level).</text>
</comment>
<comment type="miscellaneous">
    <text evidence="7">Expressed in colorectal cancer (at protein level).</text>
</comment>
<comment type="similarity">
    <text evidence="4">Belongs to the peptidase S1 family.</text>
</comment>
<gene>
    <name evidence="9" type="primary">TMPRSS12</name>
</gene>
<organism>
    <name type="scientific">Homo sapiens</name>
    <name type="common">Human</name>
    <dbReference type="NCBI Taxonomy" id="9606"/>
    <lineage>
        <taxon>Eukaryota</taxon>
        <taxon>Metazoa</taxon>
        <taxon>Chordata</taxon>
        <taxon>Craniata</taxon>
        <taxon>Vertebrata</taxon>
        <taxon>Euteleostomi</taxon>
        <taxon>Mammalia</taxon>
        <taxon>Eutheria</taxon>
        <taxon>Euarchontoglires</taxon>
        <taxon>Primates</taxon>
        <taxon>Haplorrhini</taxon>
        <taxon>Catarrhini</taxon>
        <taxon>Hominidae</taxon>
        <taxon>Homo</taxon>
    </lineage>
</organism>
<sequence>MRLGLLSVALLFVGSSHLYSDHYSPSGRHRLGPSPEPAASSQQAEAVRKRLRRRREGGAHAEDCGTAPLKDVLQGSRIIGGTEAQAGAWPWVVSLQIKYGRVLVHVCGGTLVRERWVLTAAHCTKDASDPLMWTAVIGTNNIHGRYPHTKKIKIKAIIIHPNFILESYVNDIALFHLKKAVRYNDYIQPICLPFDVFQILDGNTKCFISGWGRTKEEGNATNILQDAEVHYISREMCNSERSYGGIIPNTSFCAGDEDGAFDTCRGDSGGPLMCYLPEYKRFFVMGITSYGHGCGRRGFPGVYIGPSFYQKWLTEHFFHASTQGILTINILRGQILIALCFVILLATT</sequence>
<dbReference type="EC" id="3.4.21.-"/>
<dbReference type="EMBL" id="AC008121">
    <property type="status" value="NOT_ANNOTATED_CDS"/>
    <property type="molecule type" value="Genomic_DNA"/>
</dbReference>
<dbReference type="EMBL" id="AC013244">
    <property type="status" value="NOT_ANNOTATED_CDS"/>
    <property type="molecule type" value="Genomic_DNA"/>
</dbReference>
<dbReference type="EMBL" id="BC048112">
    <property type="protein sequence ID" value="AAH48112.1"/>
    <property type="molecule type" value="mRNA"/>
</dbReference>
<dbReference type="CCDS" id="CCDS44881.1"/>
<dbReference type="RefSeq" id="NP_872365.2">
    <property type="nucleotide sequence ID" value="NM_182559.3"/>
</dbReference>
<dbReference type="SMR" id="Q86WS5"/>
<dbReference type="BioGRID" id="129574">
    <property type="interactions" value="22"/>
</dbReference>
<dbReference type="FunCoup" id="Q86WS5">
    <property type="interactions" value="66"/>
</dbReference>
<dbReference type="IntAct" id="Q86WS5">
    <property type="interactions" value="21"/>
</dbReference>
<dbReference type="STRING" id="9606.ENSP00000381476"/>
<dbReference type="MEROPS" id="S01.291"/>
<dbReference type="GlyCosmos" id="Q86WS5">
    <property type="glycosylation" value="2 sites, No reported glycans"/>
</dbReference>
<dbReference type="GlyGen" id="Q86WS5">
    <property type="glycosylation" value="2 sites"/>
</dbReference>
<dbReference type="iPTMnet" id="Q86WS5"/>
<dbReference type="PhosphoSitePlus" id="Q86WS5"/>
<dbReference type="BioMuta" id="TMPRSS12"/>
<dbReference type="DMDM" id="317373305"/>
<dbReference type="MassIVE" id="Q86WS5"/>
<dbReference type="PaxDb" id="9606-ENSP00000381476"/>
<dbReference type="PeptideAtlas" id="Q86WS5"/>
<dbReference type="ProteomicsDB" id="70199"/>
<dbReference type="Antibodypedia" id="2710">
    <property type="antibodies" value="75 antibodies from 15 providers"/>
</dbReference>
<dbReference type="DNASU" id="283471"/>
<dbReference type="Ensembl" id="ENST00000398458.4">
    <property type="protein sequence ID" value="ENSP00000381476.3"/>
    <property type="gene ID" value="ENSG00000186452.11"/>
</dbReference>
<dbReference type="GeneID" id="283471"/>
<dbReference type="KEGG" id="hsa:283471"/>
<dbReference type="MANE-Select" id="ENST00000398458.4">
    <property type="protein sequence ID" value="ENSP00000381476.3"/>
    <property type="RefSeq nucleotide sequence ID" value="NM_182559.3"/>
    <property type="RefSeq protein sequence ID" value="NP_872365.2"/>
</dbReference>
<dbReference type="UCSC" id="uc001rwx.5">
    <property type="organism name" value="human"/>
</dbReference>
<dbReference type="AGR" id="HGNC:28779"/>
<dbReference type="CTD" id="283471"/>
<dbReference type="DisGeNET" id="283471"/>
<dbReference type="GeneCards" id="TMPRSS12"/>
<dbReference type="HGNC" id="HGNC:28779">
    <property type="gene designation" value="TMPRSS12"/>
</dbReference>
<dbReference type="HPA" id="ENSG00000186452">
    <property type="expression patterns" value="Tissue enriched (testis)"/>
</dbReference>
<dbReference type="neXtProt" id="NX_Q86WS5"/>
<dbReference type="OpenTargets" id="ENSG00000186452"/>
<dbReference type="PharmGKB" id="PA142670731"/>
<dbReference type="VEuPathDB" id="HostDB:ENSG00000186452"/>
<dbReference type="eggNOG" id="KOG3627">
    <property type="taxonomic scope" value="Eukaryota"/>
</dbReference>
<dbReference type="GeneTree" id="ENSGT00940000161878"/>
<dbReference type="HOGENOM" id="CLU_006842_0_4_1"/>
<dbReference type="InParanoid" id="Q86WS5"/>
<dbReference type="OMA" id="HEAEVHY"/>
<dbReference type="OrthoDB" id="6339452at2759"/>
<dbReference type="PAN-GO" id="Q86WS5">
    <property type="GO annotations" value="0 GO annotations based on evolutionary models"/>
</dbReference>
<dbReference type="PhylomeDB" id="Q86WS5"/>
<dbReference type="TreeFam" id="TF335943"/>
<dbReference type="PathwayCommons" id="Q86WS5"/>
<dbReference type="SignaLink" id="Q86WS5"/>
<dbReference type="BioGRID-ORCS" id="283471">
    <property type="hits" value="13 hits in 1143 CRISPR screens"/>
</dbReference>
<dbReference type="ChiTaRS" id="TMPRSS12">
    <property type="organism name" value="human"/>
</dbReference>
<dbReference type="GenomeRNAi" id="283471"/>
<dbReference type="Pharos" id="Q86WS5">
    <property type="development level" value="Tbio"/>
</dbReference>
<dbReference type="PRO" id="PR:Q86WS5"/>
<dbReference type="Proteomes" id="UP000005640">
    <property type="component" value="Chromosome 12"/>
</dbReference>
<dbReference type="RNAct" id="Q86WS5">
    <property type="molecule type" value="protein"/>
</dbReference>
<dbReference type="Bgee" id="ENSG00000186452">
    <property type="expression patterns" value="Expressed in sperm and 32 other cell types or tissues"/>
</dbReference>
<dbReference type="ExpressionAtlas" id="Q86WS5">
    <property type="expression patterns" value="baseline and differential"/>
</dbReference>
<dbReference type="GO" id="GO:0001669">
    <property type="term" value="C:acrosomal vesicle"/>
    <property type="evidence" value="ECO:0000250"/>
    <property type="project" value="UniProtKB"/>
</dbReference>
<dbReference type="GO" id="GO:0005886">
    <property type="term" value="C:plasma membrane"/>
    <property type="evidence" value="ECO:0007669"/>
    <property type="project" value="UniProtKB-SubCell"/>
</dbReference>
<dbReference type="GO" id="GO:0004252">
    <property type="term" value="F:serine-type endopeptidase activity"/>
    <property type="evidence" value="ECO:0007669"/>
    <property type="project" value="InterPro"/>
</dbReference>
<dbReference type="GO" id="GO:0001675">
    <property type="term" value="P:acrosome assembly"/>
    <property type="evidence" value="ECO:0000250"/>
    <property type="project" value="UniProtKB"/>
</dbReference>
<dbReference type="GO" id="GO:0007339">
    <property type="term" value="P:binding of sperm to zona pellucida"/>
    <property type="evidence" value="ECO:0007669"/>
    <property type="project" value="Ensembl"/>
</dbReference>
<dbReference type="GO" id="GO:1902492">
    <property type="term" value="P:positive regulation of sperm capacitation"/>
    <property type="evidence" value="ECO:0000250"/>
    <property type="project" value="UniProtKB"/>
</dbReference>
<dbReference type="GO" id="GO:0016485">
    <property type="term" value="P:protein processing"/>
    <property type="evidence" value="ECO:0007669"/>
    <property type="project" value="Ensembl"/>
</dbReference>
<dbReference type="GO" id="GO:0007283">
    <property type="term" value="P:spermatogenesis"/>
    <property type="evidence" value="ECO:0000250"/>
    <property type="project" value="UniProtKB"/>
</dbReference>
<dbReference type="CDD" id="cd00190">
    <property type="entry name" value="Tryp_SPc"/>
    <property type="match status" value="1"/>
</dbReference>
<dbReference type="FunFam" id="2.40.10.10:FF:000003">
    <property type="entry name" value="Transmembrane serine protease 3"/>
    <property type="match status" value="1"/>
</dbReference>
<dbReference type="Gene3D" id="2.40.10.10">
    <property type="entry name" value="Trypsin-like serine proteases"/>
    <property type="match status" value="1"/>
</dbReference>
<dbReference type="InterPro" id="IPR009003">
    <property type="entry name" value="Peptidase_S1_PA"/>
</dbReference>
<dbReference type="InterPro" id="IPR043504">
    <property type="entry name" value="Peptidase_S1_PA_chymotrypsin"/>
</dbReference>
<dbReference type="InterPro" id="IPR001314">
    <property type="entry name" value="Peptidase_S1A"/>
</dbReference>
<dbReference type="InterPro" id="IPR001254">
    <property type="entry name" value="Trypsin_dom"/>
</dbReference>
<dbReference type="InterPro" id="IPR018114">
    <property type="entry name" value="TRYPSIN_HIS"/>
</dbReference>
<dbReference type="InterPro" id="IPR033116">
    <property type="entry name" value="TRYPSIN_SER"/>
</dbReference>
<dbReference type="PANTHER" id="PTHR24252">
    <property type="entry name" value="ACROSIN-RELATED"/>
    <property type="match status" value="1"/>
</dbReference>
<dbReference type="PANTHER" id="PTHR24252:SF21">
    <property type="entry name" value="TRANSMEMBRANE SERINE PROTEASE 12"/>
    <property type="match status" value="1"/>
</dbReference>
<dbReference type="Pfam" id="PF00089">
    <property type="entry name" value="Trypsin"/>
    <property type="match status" value="1"/>
</dbReference>
<dbReference type="PRINTS" id="PR00722">
    <property type="entry name" value="CHYMOTRYPSIN"/>
</dbReference>
<dbReference type="SMART" id="SM00020">
    <property type="entry name" value="Tryp_SPc"/>
    <property type="match status" value="1"/>
</dbReference>
<dbReference type="SUPFAM" id="SSF50494">
    <property type="entry name" value="Trypsin-like serine proteases"/>
    <property type="match status" value="1"/>
</dbReference>
<dbReference type="PROSITE" id="PS50240">
    <property type="entry name" value="TRYPSIN_DOM"/>
    <property type="match status" value="1"/>
</dbReference>
<dbReference type="PROSITE" id="PS00134">
    <property type="entry name" value="TRYPSIN_HIS"/>
    <property type="match status" value="1"/>
</dbReference>
<dbReference type="PROSITE" id="PS00135">
    <property type="entry name" value="TRYPSIN_SER"/>
    <property type="match status" value="1"/>
</dbReference>